<keyword id="KW-1185">Reference proteome</keyword>
<keyword id="KW-0687">Ribonucleoprotein</keyword>
<keyword id="KW-0689">Ribosomal protein</keyword>
<keyword id="KW-0694">RNA-binding</keyword>
<keyword id="KW-0699">rRNA-binding</keyword>
<evidence type="ECO:0000255" key="1">
    <source>
        <dbReference type="HAMAP-Rule" id="MF_01331"/>
    </source>
</evidence>
<evidence type="ECO:0000305" key="2"/>
<feature type="chain" id="PRO_0000125167" description="Large ribosomal subunit protein uL22">
    <location>
        <begin position="1"/>
        <end position="115"/>
    </location>
</feature>
<proteinExistence type="inferred from homology"/>
<dbReference type="EMBL" id="AL935263">
    <property type="protein sequence ID" value="CCC78449.1"/>
    <property type="molecule type" value="Genomic_DNA"/>
</dbReference>
<dbReference type="RefSeq" id="WP_003638065.1">
    <property type="nucleotide sequence ID" value="NC_004567.2"/>
</dbReference>
<dbReference type="RefSeq" id="YP_004888963.1">
    <property type="nucleotide sequence ID" value="NC_004567.2"/>
</dbReference>
<dbReference type="SMR" id="Q88XY1"/>
<dbReference type="STRING" id="220668.lp_1039"/>
<dbReference type="EnsemblBacteria" id="CCC78449">
    <property type="protein sequence ID" value="CCC78449"/>
    <property type="gene ID" value="lp_1039"/>
</dbReference>
<dbReference type="GeneID" id="89668552"/>
<dbReference type="KEGG" id="lpl:lp_1039"/>
<dbReference type="PATRIC" id="fig|220668.9.peg.876"/>
<dbReference type="eggNOG" id="COG0091">
    <property type="taxonomic scope" value="Bacteria"/>
</dbReference>
<dbReference type="HOGENOM" id="CLU_083987_3_3_9"/>
<dbReference type="OrthoDB" id="9805969at2"/>
<dbReference type="PhylomeDB" id="Q88XY1"/>
<dbReference type="Proteomes" id="UP000000432">
    <property type="component" value="Chromosome"/>
</dbReference>
<dbReference type="GO" id="GO:0022625">
    <property type="term" value="C:cytosolic large ribosomal subunit"/>
    <property type="evidence" value="ECO:0007669"/>
    <property type="project" value="TreeGrafter"/>
</dbReference>
<dbReference type="GO" id="GO:0019843">
    <property type="term" value="F:rRNA binding"/>
    <property type="evidence" value="ECO:0007669"/>
    <property type="project" value="UniProtKB-UniRule"/>
</dbReference>
<dbReference type="GO" id="GO:0003735">
    <property type="term" value="F:structural constituent of ribosome"/>
    <property type="evidence" value="ECO:0007669"/>
    <property type="project" value="InterPro"/>
</dbReference>
<dbReference type="GO" id="GO:0006412">
    <property type="term" value="P:translation"/>
    <property type="evidence" value="ECO:0007669"/>
    <property type="project" value="UniProtKB-UniRule"/>
</dbReference>
<dbReference type="CDD" id="cd00336">
    <property type="entry name" value="Ribosomal_L22"/>
    <property type="match status" value="1"/>
</dbReference>
<dbReference type="FunFam" id="3.90.470.10:FF:000001">
    <property type="entry name" value="50S ribosomal protein L22"/>
    <property type="match status" value="1"/>
</dbReference>
<dbReference type="Gene3D" id="3.90.470.10">
    <property type="entry name" value="Ribosomal protein L22/L17"/>
    <property type="match status" value="1"/>
</dbReference>
<dbReference type="HAMAP" id="MF_01331_B">
    <property type="entry name" value="Ribosomal_uL22_B"/>
    <property type="match status" value="1"/>
</dbReference>
<dbReference type="InterPro" id="IPR001063">
    <property type="entry name" value="Ribosomal_uL22"/>
</dbReference>
<dbReference type="InterPro" id="IPR005727">
    <property type="entry name" value="Ribosomal_uL22_bac/chlpt-type"/>
</dbReference>
<dbReference type="InterPro" id="IPR047867">
    <property type="entry name" value="Ribosomal_uL22_bac/org-type"/>
</dbReference>
<dbReference type="InterPro" id="IPR018260">
    <property type="entry name" value="Ribosomal_uL22_CS"/>
</dbReference>
<dbReference type="InterPro" id="IPR036394">
    <property type="entry name" value="Ribosomal_uL22_sf"/>
</dbReference>
<dbReference type="NCBIfam" id="TIGR01044">
    <property type="entry name" value="rplV_bact"/>
    <property type="match status" value="1"/>
</dbReference>
<dbReference type="PANTHER" id="PTHR13501">
    <property type="entry name" value="CHLOROPLAST 50S RIBOSOMAL PROTEIN L22-RELATED"/>
    <property type="match status" value="1"/>
</dbReference>
<dbReference type="PANTHER" id="PTHR13501:SF8">
    <property type="entry name" value="LARGE RIBOSOMAL SUBUNIT PROTEIN UL22M"/>
    <property type="match status" value="1"/>
</dbReference>
<dbReference type="Pfam" id="PF00237">
    <property type="entry name" value="Ribosomal_L22"/>
    <property type="match status" value="1"/>
</dbReference>
<dbReference type="SUPFAM" id="SSF54843">
    <property type="entry name" value="Ribosomal protein L22"/>
    <property type="match status" value="1"/>
</dbReference>
<dbReference type="PROSITE" id="PS00464">
    <property type="entry name" value="RIBOSOMAL_L22"/>
    <property type="match status" value="1"/>
</dbReference>
<accession>Q88XY1</accession>
<accession>F9UML0</accession>
<protein>
    <recommendedName>
        <fullName evidence="1">Large ribosomal subunit protein uL22</fullName>
    </recommendedName>
    <alternativeName>
        <fullName evidence="2">50S ribosomal protein L22</fullName>
    </alternativeName>
</protein>
<sequence>MAEQVTSARATAKTVRIAARKVRLVVDLIRGKSVAEALAILKFTPRGASPVVEKVLLSAVANAENNFDLDREDLVVSEAFVNEGPTLKRFRPRAKGSASPINKRTSHITITVTEK</sequence>
<organism>
    <name type="scientific">Lactiplantibacillus plantarum (strain ATCC BAA-793 / NCIMB 8826 / WCFS1)</name>
    <name type="common">Lactobacillus plantarum</name>
    <dbReference type="NCBI Taxonomy" id="220668"/>
    <lineage>
        <taxon>Bacteria</taxon>
        <taxon>Bacillati</taxon>
        <taxon>Bacillota</taxon>
        <taxon>Bacilli</taxon>
        <taxon>Lactobacillales</taxon>
        <taxon>Lactobacillaceae</taxon>
        <taxon>Lactiplantibacillus</taxon>
    </lineage>
</organism>
<gene>
    <name evidence="1" type="primary">rplV</name>
    <name type="ordered locus">lp_1039</name>
</gene>
<name>RL22_LACPL</name>
<comment type="function">
    <text evidence="1">This protein binds specifically to 23S rRNA; its binding is stimulated by other ribosomal proteins, e.g. L4, L17, and L20. It is important during the early stages of 50S assembly. It makes multiple contacts with different domains of the 23S rRNA in the assembled 50S subunit and ribosome (By similarity).</text>
</comment>
<comment type="function">
    <text evidence="1">The globular domain of the protein is located near the polypeptide exit tunnel on the outside of the subunit, while an extended beta-hairpin is found that lines the wall of the exit tunnel in the center of the 70S ribosome.</text>
</comment>
<comment type="subunit">
    <text evidence="1">Part of the 50S ribosomal subunit.</text>
</comment>
<comment type="similarity">
    <text evidence="1">Belongs to the universal ribosomal protein uL22 family.</text>
</comment>
<reference key="1">
    <citation type="journal article" date="2003" name="Proc. Natl. Acad. Sci. U.S.A.">
        <title>Complete genome sequence of Lactobacillus plantarum WCFS1.</title>
        <authorList>
            <person name="Kleerebezem M."/>
            <person name="Boekhorst J."/>
            <person name="van Kranenburg R."/>
            <person name="Molenaar D."/>
            <person name="Kuipers O.P."/>
            <person name="Leer R."/>
            <person name="Tarchini R."/>
            <person name="Peters S.A."/>
            <person name="Sandbrink H.M."/>
            <person name="Fiers M.W.E.J."/>
            <person name="Stiekema W."/>
            <person name="Klein Lankhorst R.M."/>
            <person name="Bron P.A."/>
            <person name="Hoffer S.M."/>
            <person name="Nierop Groot M.N."/>
            <person name="Kerkhoven R."/>
            <person name="De Vries M."/>
            <person name="Ursing B."/>
            <person name="De Vos W.M."/>
            <person name="Siezen R.J."/>
        </authorList>
    </citation>
    <scope>NUCLEOTIDE SEQUENCE [LARGE SCALE GENOMIC DNA]</scope>
    <source>
        <strain>ATCC BAA-793 / NCIMB 8826 / WCFS1</strain>
    </source>
</reference>
<reference key="2">
    <citation type="journal article" date="2012" name="J. Bacteriol.">
        <title>Complete resequencing and reannotation of the Lactobacillus plantarum WCFS1 genome.</title>
        <authorList>
            <person name="Siezen R.J."/>
            <person name="Francke C."/>
            <person name="Renckens B."/>
            <person name="Boekhorst J."/>
            <person name="Wels M."/>
            <person name="Kleerebezem M."/>
            <person name="van Hijum S.A."/>
        </authorList>
    </citation>
    <scope>NUCLEOTIDE SEQUENCE [LARGE SCALE GENOMIC DNA]</scope>
    <scope>GENOME REANNOTATION</scope>
    <source>
        <strain>ATCC BAA-793 / NCIMB 8826 / WCFS1</strain>
    </source>
</reference>